<proteinExistence type="inferred from homology"/>
<organism>
    <name type="scientific">Burkholderia pseudomallei (strain K96243)</name>
    <dbReference type="NCBI Taxonomy" id="272560"/>
    <lineage>
        <taxon>Bacteria</taxon>
        <taxon>Pseudomonadati</taxon>
        <taxon>Pseudomonadota</taxon>
        <taxon>Betaproteobacteria</taxon>
        <taxon>Burkholderiales</taxon>
        <taxon>Burkholderiaceae</taxon>
        <taxon>Burkholderia</taxon>
        <taxon>pseudomallei group</taxon>
    </lineage>
</organism>
<name>URE1_BURPS</name>
<protein>
    <recommendedName>
        <fullName evidence="1">Urease subunit alpha</fullName>
        <ecNumber evidence="1">3.5.1.5</ecNumber>
    </recommendedName>
    <alternativeName>
        <fullName evidence="1">Urea amidohydrolase subunit alpha</fullName>
    </alternativeName>
</protein>
<sequence>MTLRLSRRAYAEMYGPTTGDRIRLADTELLIEVERDHTLYGEEVKFGGGKVIRDGMGQSQLPAADVADTVITNAVILDHWGIVKADIAIKHGRIAAIGKAGNPDIQPGVTIAIGAATEIIAGEGLIVTAGGIDTHIHFISPQQIDEALASGVTTMIGGGTGPATGTNATTCTPGPWHMERMLQAADGWPINLGFLGKGNASRPQPLVEQIEAGAIGLKLHEDWGTTPAAIDNCLTVADDTDTQVAIHTDTLNEAGFVEATVAAFKGRTIHTYHTEGAGGGHAPDILKVCGEANVLPSSTNPTRPYTINTLDEHLDMLMVCHHLDPSIAEDLAFAESRIRRETIAAEDILHDLGALSMLSSDSQAMGRVGEVIIRTWQTAHKMKVQRGALTGDGARNDNFRAKRYVAKYTINPALTHGIAHEVGSIEPGKWADLVLWEPAFFGVKPAMIIKGGMIAVAQMGDPNASIPTPQPVHYREMFATRGGALARTSLTFVSQLALDAGISARYGLAKRLVPVRGCRTVTKRDMIHNAWQPAIRVDPETYDVVADGALLTCEPAAVLPMAQRYFLF</sequence>
<accession>Q63RL3</accession>
<gene>
    <name evidence="1" type="primary">ureC</name>
    <name type="ordered locus">BPSL2659</name>
</gene>
<reference key="1">
    <citation type="journal article" date="2004" name="Proc. Natl. Acad. Sci. U.S.A.">
        <title>Genomic plasticity of the causative agent of melioidosis, Burkholderia pseudomallei.</title>
        <authorList>
            <person name="Holden M.T.G."/>
            <person name="Titball R.W."/>
            <person name="Peacock S.J."/>
            <person name="Cerdeno-Tarraga A.-M."/>
            <person name="Atkins T."/>
            <person name="Crossman L.C."/>
            <person name="Pitt T."/>
            <person name="Churcher C."/>
            <person name="Mungall K.L."/>
            <person name="Bentley S.D."/>
            <person name="Sebaihia M."/>
            <person name="Thomson N.R."/>
            <person name="Bason N."/>
            <person name="Beacham I.R."/>
            <person name="Brooks K."/>
            <person name="Brown K.A."/>
            <person name="Brown N.F."/>
            <person name="Challis G.L."/>
            <person name="Cherevach I."/>
            <person name="Chillingworth T."/>
            <person name="Cronin A."/>
            <person name="Crossett B."/>
            <person name="Davis P."/>
            <person name="DeShazer D."/>
            <person name="Feltwell T."/>
            <person name="Fraser A."/>
            <person name="Hance Z."/>
            <person name="Hauser H."/>
            <person name="Holroyd S."/>
            <person name="Jagels K."/>
            <person name="Keith K.E."/>
            <person name="Maddison M."/>
            <person name="Moule S."/>
            <person name="Price C."/>
            <person name="Quail M.A."/>
            <person name="Rabbinowitsch E."/>
            <person name="Rutherford K."/>
            <person name="Sanders M."/>
            <person name="Simmonds M."/>
            <person name="Songsivilai S."/>
            <person name="Stevens K."/>
            <person name="Tumapa S."/>
            <person name="Vesaratchavest M."/>
            <person name="Whitehead S."/>
            <person name="Yeats C."/>
            <person name="Barrell B.G."/>
            <person name="Oyston P.C.F."/>
            <person name="Parkhill J."/>
        </authorList>
    </citation>
    <scope>NUCLEOTIDE SEQUENCE [LARGE SCALE GENOMIC DNA]</scope>
    <source>
        <strain>K96243</strain>
    </source>
</reference>
<comment type="catalytic activity">
    <reaction evidence="1">
        <text>urea + 2 H2O + H(+) = hydrogencarbonate + 2 NH4(+)</text>
        <dbReference type="Rhea" id="RHEA:20557"/>
        <dbReference type="ChEBI" id="CHEBI:15377"/>
        <dbReference type="ChEBI" id="CHEBI:15378"/>
        <dbReference type="ChEBI" id="CHEBI:16199"/>
        <dbReference type="ChEBI" id="CHEBI:17544"/>
        <dbReference type="ChEBI" id="CHEBI:28938"/>
        <dbReference type="EC" id="3.5.1.5"/>
    </reaction>
</comment>
<comment type="cofactor">
    <cofactor evidence="1">
        <name>Ni cation</name>
        <dbReference type="ChEBI" id="CHEBI:25516"/>
    </cofactor>
    <text evidence="1">Binds 2 nickel ions per subunit.</text>
</comment>
<comment type="pathway">
    <text evidence="1">Nitrogen metabolism; urea degradation; CO(2) and NH(3) from urea (urease route): step 1/1.</text>
</comment>
<comment type="subunit">
    <text evidence="1">Heterotrimer of UreA (gamma), UreB (beta) and UreC (alpha) subunits. Three heterotrimers associate to form the active enzyme.</text>
</comment>
<comment type="subcellular location">
    <subcellularLocation>
        <location evidence="1">Cytoplasm</location>
    </subcellularLocation>
</comment>
<comment type="PTM">
    <text evidence="1">Carboxylation allows a single lysine to coordinate two nickel ions.</text>
</comment>
<comment type="similarity">
    <text evidence="1">Belongs to the metallo-dependent hydrolases superfamily. Urease alpha subunit family.</text>
</comment>
<evidence type="ECO:0000255" key="1">
    <source>
        <dbReference type="HAMAP-Rule" id="MF_01953"/>
    </source>
</evidence>
<keyword id="KW-0963">Cytoplasm</keyword>
<keyword id="KW-0378">Hydrolase</keyword>
<keyword id="KW-0479">Metal-binding</keyword>
<keyword id="KW-0533">Nickel</keyword>
<keyword id="KW-1185">Reference proteome</keyword>
<dbReference type="EC" id="3.5.1.5" evidence="1"/>
<dbReference type="EMBL" id="BX571965">
    <property type="protein sequence ID" value="CAH36667.1"/>
    <property type="molecule type" value="Genomic_DNA"/>
</dbReference>
<dbReference type="RefSeq" id="WP_011205201.1">
    <property type="nucleotide sequence ID" value="NC_006350.1"/>
</dbReference>
<dbReference type="RefSeq" id="YP_109255.1">
    <property type="nucleotide sequence ID" value="NC_006350.1"/>
</dbReference>
<dbReference type="SMR" id="Q63RL3"/>
<dbReference type="STRING" id="272560.BPSL2659"/>
<dbReference type="MEROPS" id="M38.982"/>
<dbReference type="KEGG" id="bps:BPSL2659"/>
<dbReference type="PATRIC" id="fig|272560.51.peg.2685"/>
<dbReference type="eggNOG" id="COG0804">
    <property type="taxonomic scope" value="Bacteria"/>
</dbReference>
<dbReference type="UniPathway" id="UPA00258">
    <property type="reaction ID" value="UER00370"/>
</dbReference>
<dbReference type="Proteomes" id="UP000000605">
    <property type="component" value="Chromosome 1"/>
</dbReference>
<dbReference type="GO" id="GO:0005737">
    <property type="term" value="C:cytoplasm"/>
    <property type="evidence" value="ECO:0007669"/>
    <property type="project" value="UniProtKB-SubCell"/>
</dbReference>
<dbReference type="GO" id="GO:0016151">
    <property type="term" value="F:nickel cation binding"/>
    <property type="evidence" value="ECO:0007669"/>
    <property type="project" value="UniProtKB-UniRule"/>
</dbReference>
<dbReference type="GO" id="GO:0009039">
    <property type="term" value="F:urease activity"/>
    <property type="evidence" value="ECO:0007669"/>
    <property type="project" value="UniProtKB-UniRule"/>
</dbReference>
<dbReference type="GO" id="GO:0043419">
    <property type="term" value="P:urea catabolic process"/>
    <property type="evidence" value="ECO:0007669"/>
    <property type="project" value="UniProtKB-UniRule"/>
</dbReference>
<dbReference type="CDD" id="cd00375">
    <property type="entry name" value="Urease_alpha"/>
    <property type="match status" value="1"/>
</dbReference>
<dbReference type="Gene3D" id="3.20.20.140">
    <property type="entry name" value="Metal-dependent hydrolases"/>
    <property type="match status" value="1"/>
</dbReference>
<dbReference type="Gene3D" id="2.30.40.10">
    <property type="entry name" value="Urease, subunit C, domain 1"/>
    <property type="match status" value="1"/>
</dbReference>
<dbReference type="HAMAP" id="MF_01953">
    <property type="entry name" value="Urease_alpha"/>
    <property type="match status" value="1"/>
</dbReference>
<dbReference type="InterPro" id="IPR006680">
    <property type="entry name" value="Amidohydro-rel"/>
</dbReference>
<dbReference type="InterPro" id="IPR011059">
    <property type="entry name" value="Metal-dep_hydrolase_composite"/>
</dbReference>
<dbReference type="InterPro" id="IPR032466">
    <property type="entry name" value="Metal_Hydrolase"/>
</dbReference>
<dbReference type="InterPro" id="IPR011612">
    <property type="entry name" value="Urease_alpha_N_dom"/>
</dbReference>
<dbReference type="InterPro" id="IPR050112">
    <property type="entry name" value="Urease_alpha_subunit"/>
</dbReference>
<dbReference type="InterPro" id="IPR017950">
    <property type="entry name" value="Urease_AS"/>
</dbReference>
<dbReference type="InterPro" id="IPR005848">
    <property type="entry name" value="Urease_asu"/>
</dbReference>
<dbReference type="InterPro" id="IPR017951">
    <property type="entry name" value="Urease_asu_c"/>
</dbReference>
<dbReference type="InterPro" id="IPR029754">
    <property type="entry name" value="Urease_Ni-bd"/>
</dbReference>
<dbReference type="NCBIfam" id="NF009685">
    <property type="entry name" value="PRK13206.1"/>
    <property type="match status" value="1"/>
</dbReference>
<dbReference type="NCBIfam" id="NF009686">
    <property type="entry name" value="PRK13207.1"/>
    <property type="match status" value="1"/>
</dbReference>
<dbReference type="NCBIfam" id="TIGR01792">
    <property type="entry name" value="urease_alph"/>
    <property type="match status" value="1"/>
</dbReference>
<dbReference type="PANTHER" id="PTHR43440">
    <property type="entry name" value="UREASE"/>
    <property type="match status" value="1"/>
</dbReference>
<dbReference type="PANTHER" id="PTHR43440:SF1">
    <property type="entry name" value="UREASE"/>
    <property type="match status" value="1"/>
</dbReference>
<dbReference type="Pfam" id="PF01979">
    <property type="entry name" value="Amidohydro_1"/>
    <property type="match status" value="1"/>
</dbReference>
<dbReference type="Pfam" id="PF00449">
    <property type="entry name" value="Urease_alpha"/>
    <property type="match status" value="1"/>
</dbReference>
<dbReference type="PRINTS" id="PR01752">
    <property type="entry name" value="UREASE"/>
</dbReference>
<dbReference type="SUPFAM" id="SSF51338">
    <property type="entry name" value="Composite domain of metallo-dependent hydrolases"/>
    <property type="match status" value="2"/>
</dbReference>
<dbReference type="SUPFAM" id="SSF51556">
    <property type="entry name" value="Metallo-dependent hydrolases"/>
    <property type="match status" value="1"/>
</dbReference>
<dbReference type="PROSITE" id="PS01120">
    <property type="entry name" value="UREASE_1"/>
    <property type="match status" value="1"/>
</dbReference>
<dbReference type="PROSITE" id="PS00145">
    <property type="entry name" value="UREASE_2"/>
    <property type="match status" value="1"/>
</dbReference>
<dbReference type="PROSITE" id="PS51368">
    <property type="entry name" value="UREASE_3"/>
    <property type="match status" value="1"/>
</dbReference>
<feature type="chain" id="PRO_0000234148" description="Urease subunit alpha">
    <location>
        <begin position="1"/>
        <end position="568"/>
    </location>
</feature>
<feature type="domain" description="Urease" evidence="1">
    <location>
        <begin position="130"/>
        <end position="568"/>
    </location>
</feature>
<feature type="active site" description="Proton donor" evidence="1">
    <location>
        <position position="321"/>
    </location>
</feature>
<feature type="binding site" evidence="1">
    <location>
        <position position="135"/>
    </location>
    <ligand>
        <name>Ni(2+)</name>
        <dbReference type="ChEBI" id="CHEBI:49786"/>
        <label>1</label>
    </ligand>
</feature>
<feature type="binding site" evidence="1">
    <location>
        <position position="137"/>
    </location>
    <ligand>
        <name>Ni(2+)</name>
        <dbReference type="ChEBI" id="CHEBI:49786"/>
        <label>1</label>
    </ligand>
</feature>
<feature type="binding site" description="via carbamate group" evidence="1">
    <location>
        <position position="218"/>
    </location>
    <ligand>
        <name>Ni(2+)</name>
        <dbReference type="ChEBI" id="CHEBI:49786"/>
        <label>1</label>
    </ligand>
</feature>
<feature type="binding site" description="via carbamate group" evidence="1">
    <location>
        <position position="218"/>
    </location>
    <ligand>
        <name>Ni(2+)</name>
        <dbReference type="ChEBI" id="CHEBI:49786"/>
        <label>2</label>
    </ligand>
</feature>
<feature type="binding site" evidence="1">
    <location>
        <position position="220"/>
    </location>
    <ligand>
        <name>substrate</name>
    </ligand>
</feature>
<feature type="binding site" evidence="1">
    <location>
        <position position="247"/>
    </location>
    <ligand>
        <name>Ni(2+)</name>
        <dbReference type="ChEBI" id="CHEBI:49786"/>
        <label>2</label>
    </ligand>
</feature>
<feature type="binding site" evidence="1">
    <location>
        <position position="273"/>
    </location>
    <ligand>
        <name>Ni(2+)</name>
        <dbReference type="ChEBI" id="CHEBI:49786"/>
        <label>2</label>
    </ligand>
</feature>
<feature type="binding site" evidence="1">
    <location>
        <position position="361"/>
    </location>
    <ligand>
        <name>Ni(2+)</name>
        <dbReference type="ChEBI" id="CHEBI:49786"/>
        <label>1</label>
    </ligand>
</feature>
<feature type="modified residue" description="N6-carboxylysine" evidence="1">
    <location>
        <position position="218"/>
    </location>
</feature>